<accession>P34245</accession>
<accession>A0A1S0T086</accession>
<sequence length="136" mass="15443">MFLFTFTILESEKLIIWPVPAVVLGVMAPKRAYSTPFGPWPGPAECLWNCPSELRQFSSCCLPLPKLRPPRPTFASLWRVVAAIAALFQVPWRRKTGVGKAIFCIGCCCLAYQWRRTRYFAYKIMTGTCFMTDLAP</sequence>
<reference key="1">
    <citation type="journal article" date="1993" name="Yeast">
        <title>DNA sequence analysis of a 17 kb fragment of yeast chromosome XI physically localizes the MRB1 gene and reveals eight new open reading frames, including a homologue of the KIN1/KIN2 and SNF1 protein kinases.</title>
        <authorList>
            <person name="Pallier C."/>
            <person name="Valens M."/>
            <person name="Puzos V."/>
            <person name="Fukuhara H."/>
            <person name="Cheret G."/>
            <person name="Sor F."/>
            <person name="Bolotin-Fukuhara M."/>
        </authorList>
    </citation>
    <scope>NUCLEOTIDE SEQUENCE [GENOMIC DNA]</scope>
    <source>
        <strain>ATCC 204508 / S288c</strain>
    </source>
</reference>
<reference key="2">
    <citation type="journal article" date="1994" name="Nature">
        <title>Complete DNA sequence of yeast chromosome XI.</title>
        <authorList>
            <person name="Dujon B."/>
            <person name="Alexandraki D."/>
            <person name="Andre B."/>
            <person name="Ansorge W."/>
            <person name="Baladron V."/>
            <person name="Ballesta J.P.G."/>
            <person name="Banrevi A."/>
            <person name="Bolle P.-A."/>
            <person name="Bolotin-Fukuhara M."/>
            <person name="Bossier P."/>
            <person name="Bou G."/>
            <person name="Boyer J."/>
            <person name="Buitrago M.J."/>
            <person name="Cheret G."/>
            <person name="Colleaux L."/>
            <person name="Daignan-Fornier B."/>
            <person name="del Rey F."/>
            <person name="Dion C."/>
            <person name="Domdey H."/>
            <person name="Duesterhoeft A."/>
            <person name="Duesterhus S."/>
            <person name="Entian K.-D."/>
            <person name="Erfle H."/>
            <person name="Esteban P.F."/>
            <person name="Feldmann H."/>
            <person name="Fernandes L."/>
            <person name="Fobo G.M."/>
            <person name="Fritz C."/>
            <person name="Fukuhara H."/>
            <person name="Gabel C."/>
            <person name="Gaillon L."/>
            <person name="Garcia-Cantalejo J.M."/>
            <person name="Garcia-Ramirez J.J."/>
            <person name="Gent M.E."/>
            <person name="Ghazvini M."/>
            <person name="Goffeau A."/>
            <person name="Gonzalez A."/>
            <person name="Grothues D."/>
            <person name="Guerreiro P."/>
            <person name="Hegemann J.H."/>
            <person name="Hewitt N."/>
            <person name="Hilger F."/>
            <person name="Hollenberg C.P."/>
            <person name="Horaitis O."/>
            <person name="Indge K.J."/>
            <person name="Jacquier A."/>
            <person name="James C.M."/>
            <person name="Jauniaux J.-C."/>
            <person name="Jimenez A."/>
            <person name="Keuchel H."/>
            <person name="Kirchrath L."/>
            <person name="Kleine K."/>
            <person name="Koetter P."/>
            <person name="Legrain P."/>
            <person name="Liebl S."/>
            <person name="Louis E.J."/>
            <person name="Maia e Silva A."/>
            <person name="Marck C."/>
            <person name="Monnier A.-L."/>
            <person name="Moestl D."/>
            <person name="Mueller S."/>
            <person name="Obermaier B."/>
            <person name="Oliver S.G."/>
            <person name="Pallier C."/>
            <person name="Pascolo S."/>
            <person name="Pfeiffer F."/>
            <person name="Philippsen P."/>
            <person name="Planta R.J."/>
            <person name="Pohl F.M."/>
            <person name="Pohl T.M."/>
            <person name="Poehlmann R."/>
            <person name="Portetelle D."/>
            <person name="Purnelle B."/>
            <person name="Puzos V."/>
            <person name="Ramezani Rad M."/>
            <person name="Rasmussen S.W."/>
            <person name="Remacha M.A."/>
            <person name="Revuelta J.L."/>
            <person name="Richard G.-F."/>
            <person name="Rieger M."/>
            <person name="Rodrigues-Pousada C."/>
            <person name="Rose M."/>
            <person name="Rupp T."/>
            <person name="Santos M.A."/>
            <person name="Schwager C."/>
            <person name="Sensen C."/>
            <person name="Skala J."/>
            <person name="Soares H."/>
            <person name="Sor F."/>
            <person name="Stegemann J."/>
            <person name="Tettelin H."/>
            <person name="Thierry A."/>
            <person name="Tzermia M."/>
            <person name="Urrestarazu L.A."/>
            <person name="van Dyck L."/>
            <person name="van Vliet-Reedijk J.C."/>
            <person name="Valens M."/>
            <person name="Vandenbol M."/>
            <person name="Vilela C."/>
            <person name="Vissers S."/>
            <person name="von Wettstein D."/>
            <person name="Voss H."/>
            <person name="Wiemann S."/>
            <person name="Xu G."/>
            <person name="Zimmermann J."/>
            <person name="Haasemann M."/>
            <person name="Becker I."/>
            <person name="Mewes H.-W."/>
        </authorList>
    </citation>
    <scope>NUCLEOTIDE SEQUENCE [LARGE SCALE GENOMIC DNA]</scope>
    <source>
        <strain>ATCC 204508 / S288c</strain>
    </source>
</reference>
<reference key="3">
    <citation type="journal article" date="2014" name="G3 (Bethesda)">
        <title>The reference genome sequence of Saccharomyces cerevisiae: Then and now.</title>
        <authorList>
            <person name="Engel S.R."/>
            <person name="Dietrich F.S."/>
            <person name="Fisk D.G."/>
            <person name="Binkley G."/>
            <person name="Balakrishnan R."/>
            <person name="Costanzo M.C."/>
            <person name="Dwight S.S."/>
            <person name="Hitz B.C."/>
            <person name="Karra K."/>
            <person name="Nash R.S."/>
            <person name="Weng S."/>
            <person name="Wong E.D."/>
            <person name="Lloyd P."/>
            <person name="Skrzypek M.S."/>
            <person name="Miyasato S.R."/>
            <person name="Simison M."/>
            <person name="Cherry J.M."/>
        </authorList>
    </citation>
    <scope>GENOME REANNOTATION</scope>
    <source>
        <strain>ATCC 204508 / S288c</strain>
    </source>
</reference>
<feature type="chain" id="PRO_0000203162" description="Uncharacterized protein YKL097C">
    <location>
        <begin position="1"/>
        <end position="136"/>
    </location>
</feature>
<organism>
    <name type="scientific">Saccharomyces cerevisiae (strain ATCC 204508 / S288c)</name>
    <name type="common">Baker's yeast</name>
    <dbReference type="NCBI Taxonomy" id="559292"/>
    <lineage>
        <taxon>Eukaryota</taxon>
        <taxon>Fungi</taxon>
        <taxon>Dikarya</taxon>
        <taxon>Ascomycota</taxon>
        <taxon>Saccharomycotina</taxon>
        <taxon>Saccharomycetes</taxon>
        <taxon>Saccharomycetales</taxon>
        <taxon>Saccharomycetaceae</taxon>
        <taxon>Saccharomyces</taxon>
    </lineage>
</organism>
<dbReference type="EMBL" id="X71133">
    <property type="protein sequence ID" value="CAA50460.1"/>
    <property type="molecule type" value="Genomic_DNA"/>
</dbReference>
<dbReference type="EMBL" id="Z28097">
    <property type="protein sequence ID" value="CAA81936.1"/>
    <property type="molecule type" value="Genomic_DNA"/>
</dbReference>
<dbReference type="EMBL" id="BK006944">
    <property type="protein sequence ID" value="DAA80310.1"/>
    <property type="molecule type" value="Genomic_DNA"/>
</dbReference>
<dbReference type="PIR" id="S37924">
    <property type="entry name" value="S37924"/>
</dbReference>
<dbReference type="RefSeq" id="NP_001335790.1">
    <property type="nucleotide sequence ID" value="NM_001348850.1"/>
</dbReference>
<dbReference type="FunCoup" id="P34245">
    <property type="interactions" value="66"/>
</dbReference>
<dbReference type="IntAct" id="P34245">
    <property type="interactions" value="1"/>
</dbReference>
<dbReference type="PaxDb" id="4932-YKL097C"/>
<dbReference type="EnsemblFungi" id="YKL097C_mRNA">
    <property type="protein sequence ID" value="YKL097C"/>
    <property type="gene ID" value="YKL097C"/>
</dbReference>
<dbReference type="GeneID" id="853764"/>
<dbReference type="AGR" id="SGD:S000001580"/>
<dbReference type="SGD" id="S000001580">
    <property type="gene designation" value="YKL097C"/>
</dbReference>
<dbReference type="HOGENOM" id="CLU_1877073_0_0_1"/>
<dbReference type="InParanoid" id="P34245"/>
<dbReference type="PRO" id="PR:P34245"/>
<dbReference type="Proteomes" id="UP000002311">
    <property type="component" value="Chromosome XI"/>
</dbReference>
<dbReference type="RNAct" id="P34245">
    <property type="molecule type" value="protein"/>
</dbReference>
<keyword id="KW-1185">Reference proteome</keyword>
<gene>
    <name type="ordered locus">YKL097C</name>
    <name type="ORF">YKL445</name>
</gene>
<name>YKJ7_YEAST</name>
<proteinExistence type="predicted"/>
<protein>
    <recommendedName>
        <fullName>Uncharacterized protein YKL097C</fullName>
    </recommendedName>
</protein>